<dbReference type="EMBL" id="AP007281">
    <property type="protein sequence ID" value="BAG24967.1"/>
    <property type="molecule type" value="Genomic_DNA"/>
</dbReference>
<dbReference type="RefSeq" id="WP_003666558.1">
    <property type="nucleotide sequence ID" value="NC_010609.1"/>
</dbReference>
<dbReference type="SMR" id="B2G685"/>
<dbReference type="GeneID" id="77192084"/>
<dbReference type="KEGG" id="lrf:LAR_0451"/>
<dbReference type="HOGENOM" id="CLU_041018_2_3_9"/>
<dbReference type="GO" id="GO:0005886">
    <property type="term" value="C:plasma membrane"/>
    <property type="evidence" value="ECO:0007669"/>
    <property type="project" value="UniProtKB-SubCell"/>
</dbReference>
<dbReference type="GO" id="GO:0045259">
    <property type="term" value="C:proton-transporting ATP synthase complex"/>
    <property type="evidence" value="ECO:0007669"/>
    <property type="project" value="UniProtKB-KW"/>
</dbReference>
<dbReference type="GO" id="GO:0046933">
    <property type="term" value="F:proton-transporting ATP synthase activity, rotational mechanism"/>
    <property type="evidence" value="ECO:0007669"/>
    <property type="project" value="UniProtKB-UniRule"/>
</dbReference>
<dbReference type="GO" id="GO:0042777">
    <property type="term" value="P:proton motive force-driven plasma membrane ATP synthesis"/>
    <property type="evidence" value="ECO:0007669"/>
    <property type="project" value="TreeGrafter"/>
</dbReference>
<dbReference type="CDD" id="cd00310">
    <property type="entry name" value="ATP-synt_Fo_a_6"/>
    <property type="match status" value="1"/>
</dbReference>
<dbReference type="Gene3D" id="1.20.120.220">
    <property type="entry name" value="ATP synthase, F0 complex, subunit A"/>
    <property type="match status" value="1"/>
</dbReference>
<dbReference type="HAMAP" id="MF_01393">
    <property type="entry name" value="ATP_synth_a_bact"/>
    <property type="match status" value="1"/>
</dbReference>
<dbReference type="InterPro" id="IPR045082">
    <property type="entry name" value="ATP_syn_F0_a_bact/chloroplast"/>
</dbReference>
<dbReference type="InterPro" id="IPR000568">
    <property type="entry name" value="ATP_synth_F0_asu"/>
</dbReference>
<dbReference type="InterPro" id="IPR035908">
    <property type="entry name" value="F0_ATP_A_sf"/>
</dbReference>
<dbReference type="NCBIfam" id="TIGR01131">
    <property type="entry name" value="ATP_synt_6_or_A"/>
    <property type="match status" value="1"/>
</dbReference>
<dbReference type="NCBIfam" id="NF004479">
    <property type="entry name" value="PRK05815.1-4"/>
    <property type="match status" value="1"/>
</dbReference>
<dbReference type="PANTHER" id="PTHR42823">
    <property type="entry name" value="ATP SYNTHASE SUBUNIT A, CHLOROPLASTIC"/>
    <property type="match status" value="1"/>
</dbReference>
<dbReference type="PANTHER" id="PTHR42823:SF3">
    <property type="entry name" value="ATP SYNTHASE SUBUNIT A, CHLOROPLASTIC"/>
    <property type="match status" value="1"/>
</dbReference>
<dbReference type="Pfam" id="PF00119">
    <property type="entry name" value="ATP-synt_A"/>
    <property type="match status" value="1"/>
</dbReference>
<dbReference type="PRINTS" id="PR00123">
    <property type="entry name" value="ATPASEA"/>
</dbReference>
<dbReference type="SUPFAM" id="SSF81336">
    <property type="entry name" value="F1F0 ATP synthase subunit A"/>
    <property type="match status" value="1"/>
</dbReference>
<reference key="1">
    <citation type="journal article" date="2008" name="DNA Res.">
        <title>Comparative genome analysis of Lactobacillus reuteri and Lactobacillus fermentum reveal a genomic island for reuterin and cobalamin production.</title>
        <authorList>
            <person name="Morita H."/>
            <person name="Toh H."/>
            <person name="Fukuda S."/>
            <person name="Horikawa H."/>
            <person name="Oshima K."/>
            <person name="Suzuki T."/>
            <person name="Murakami M."/>
            <person name="Hisamatsu S."/>
            <person name="Kato Y."/>
            <person name="Takizawa T."/>
            <person name="Fukuoka H."/>
            <person name="Yoshimura T."/>
            <person name="Itoh K."/>
            <person name="O'Sullivan D.J."/>
            <person name="McKay L.L."/>
            <person name="Ohno H."/>
            <person name="Kikuchi J."/>
            <person name="Masaoka T."/>
            <person name="Hattori M."/>
        </authorList>
    </citation>
    <scope>NUCLEOTIDE SEQUENCE [LARGE SCALE GENOMIC DNA]</scope>
    <source>
        <strain>JCM 1112</strain>
    </source>
</reference>
<keyword id="KW-0066">ATP synthesis</keyword>
<keyword id="KW-1003">Cell membrane</keyword>
<keyword id="KW-0138">CF(0)</keyword>
<keyword id="KW-0375">Hydrogen ion transport</keyword>
<keyword id="KW-0406">Ion transport</keyword>
<keyword id="KW-0472">Membrane</keyword>
<keyword id="KW-0812">Transmembrane</keyword>
<keyword id="KW-1133">Transmembrane helix</keyword>
<keyword id="KW-0813">Transport</keyword>
<organism>
    <name type="scientific">Limosilactobacillus reuteri subsp. reuteri (strain JCM 1112)</name>
    <name type="common">Lactobacillus reuteri</name>
    <dbReference type="NCBI Taxonomy" id="557433"/>
    <lineage>
        <taxon>Bacteria</taxon>
        <taxon>Bacillati</taxon>
        <taxon>Bacillota</taxon>
        <taxon>Bacilli</taxon>
        <taxon>Lactobacillales</taxon>
        <taxon>Lactobacillaceae</taxon>
        <taxon>Limosilactobacillus</taxon>
    </lineage>
</organism>
<gene>
    <name evidence="1" type="primary">atpB</name>
    <name type="ordered locus">LAR_0451</name>
</gene>
<proteinExistence type="inferred from homology"/>
<feature type="chain" id="PRO_1000145284" description="ATP synthase subunit a">
    <location>
        <begin position="1"/>
        <end position="235"/>
    </location>
</feature>
<feature type="transmembrane region" description="Helical" evidence="1">
    <location>
        <begin position="17"/>
        <end position="37"/>
    </location>
</feature>
<feature type="transmembrane region" description="Helical" evidence="1">
    <location>
        <begin position="76"/>
        <end position="96"/>
    </location>
</feature>
<feature type="transmembrane region" description="Helical" evidence="1">
    <location>
        <begin position="113"/>
        <end position="133"/>
    </location>
</feature>
<feature type="transmembrane region" description="Helical" evidence="1">
    <location>
        <begin position="179"/>
        <end position="201"/>
    </location>
</feature>
<feature type="transmembrane region" description="Helical" evidence="1">
    <location>
        <begin position="211"/>
        <end position="230"/>
    </location>
</feature>
<sequence length="235" mass="26045">MGGDALTFKLFGLTFNTTNIVSGLIIYAIVFFTLYGMSRKIQMKPTGAQNVFEWLVDFTNGIVRSQMPASEQGHYSFFAFVLFVFIFFANQFGLIFQFHWNGAEVLRSPTADPVVTLTLSLMVMVLAFAAGVAHNGLGGYLKGYTKPFTLMLPVNIIEDFANFLTLGLRIFGNIFAGELLMSLIANMAFSHGILTIIPGLFLELAWQGFSVFIGSIQAYVFVTLTTVYISRKISE</sequence>
<accession>B2G685</accession>
<evidence type="ECO:0000255" key="1">
    <source>
        <dbReference type="HAMAP-Rule" id="MF_01393"/>
    </source>
</evidence>
<protein>
    <recommendedName>
        <fullName evidence="1">ATP synthase subunit a</fullName>
    </recommendedName>
    <alternativeName>
        <fullName evidence="1">ATP synthase F0 sector subunit a</fullName>
    </alternativeName>
    <alternativeName>
        <fullName evidence="1">F-ATPase subunit 6</fullName>
    </alternativeName>
</protein>
<comment type="function">
    <text evidence="1">Key component of the proton channel; it plays a direct role in the translocation of protons across the membrane.</text>
</comment>
<comment type="subunit">
    <text evidence="1">F-type ATPases have 2 components, CF(1) - the catalytic core - and CF(0) - the membrane proton channel. CF(1) has five subunits: alpha(3), beta(3), gamma(1), delta(1), epsilon(1). CF(0) has three main subunits: a(1), b(2) and c(9-12). The alpha and beta chains form an alternating ring which encloses part of the gamma chain. CF(1) is attached to CF(0) by a central stalk formed by the gamma and epsilon chains, while a peripheral stalk is formed by the delta and b chains.</text>
</comment>
<comment type="subcellular location">
    <subcellularLocation>
        <location evidence="1">Cell membrane</location>
        <topology evidence="1">Multi-pass membrane protein</topology>
    </subcellularLocation>
</comment>
<comment type="similarity">
    <text evidence="1">Belongs to the ATPase A chain family.</text>
</comment>
<name>ATP6_LIMRJ</name>